<organism>
    <name type="scientific">Mus musculus</name>
    <name type="common">Mouse</name>
    <dbReference type="NCBI Taxonomy" id="10090"/>
    <lineage>
        <taxon>Eukaryota</taxon>
        <taxon>Metazoa</taxon>
        <taxon>Chordata</taxon>
        <taxon>Craniata</taxon>
        <taxon>Vertebrata</taxon>
        <taxon>Euteleostomi</taxon>
        <taxon>Mammalia</taxon>
        <taxon>Eutheria</taxon>
        <taxon>Euarchontoglires</taxon>
        <taxon>Glires</taxon>
        <taxon>Rodentia</taxon>
        <taxon>Myomorpha</taxon>
        <taxon>Muroidea</taxon>
        <taxon>Muridae</taxon>
        <taxon>Murinae</taxon>
        <taxon>Mus</taxon>
        <taxon>Mus</taxon>
    </lineage>
</organism>
<feature type="signal peptide" evidence="1">
    <location>
        <begin position="1"/>
        <end position="17"/>
    </location>
</feature>
<feature type="chain" id="PRO_0000010379" description="Transmembrane emp24 domain-containing protein 11">
    <location>
        <begin position="18"/>
        <end position="215"/>
    </location>
</feature>
<feature type="topological domain" description="Lumenal" evidence="2">
    <location>
        <begin position="18"/>
        <end position="167"/>
    </location>
</feature>
<feature type="transmembrane region" description="Helical" evidence="2">
    <location>
        <begin position="168"/>
        <end position="185"/>
    </location>
</feature>
<feature type="topological domain" description="Cytoplasmic" evidence="2">
    <location>
        <begin position="186"/>
        <end position="215"/>
    </location>
</feature>
<feature type="domain" description="GOLD" evidence="3">
    <location>
        <begin position="27"/>
        <end position="125"/>
    </location>
</feature>
<feature type="coiled-coil region" evidence="2">
    <location>
        <begin position="136"/>
        <end position="171"/>
    </location>
</feature>
<feature type="short sequence motif" description="COPI vesicle coat-binding" evidence="2">
    <location>
        <begin position="208"/>
        <end position="215"/>
    </location>
</feature>
<feature type="short sequence motif" description="COPII vesicle coat-binding" evidence="2">
    <location>
        <begin position="208"/>
        <end position="209"/>
    </location>
</feature>
<feature type="glycosylation site" description="N-linked (GlcNAc...) asparagine" evidence="2">
    <location>
        <position position="105"/>
    </location>
</feature>
<proteinExistence type="evidence at protein level"/>
<evidence type="ECO:0000250" key="1"/>
<evidence type="ECO:0000255" key="2"/>
<evidence type="ECO:0000255" key="3">
    <source>
        <dbReference type="PROSITE-ProRule" id="PRU00096"/>
    </source>
</evidence>
<evidence type="ECO:0000305" key="4"/>
<name>TMD11_MOUSE</name>
<reference key="1">
    <citation type="journal article" date="2005" name="Science">
        <title>The transcriptional landscape of the mammalian genome.</title>
        <authorList>
            <person name="Carninci P."/>
            <person name="Kasukawa T."/>
            <person name="Katayama S."/>
            <person name="Gough J."/>
            <person name="Frith M.C."/>
            <person name="Maeda N."/>
            <person name="Oyama R."/>
            <person name="Ravasi T."/>
            <person name="Lenhard B."/>
            <person name="Wells C."/>
            <person name="Kodzius R."/>
            <person name="Shimokawa K."/>
            <person name="Bajic V.B."/>
            <person name="Brenner S.E."/>
            <person name="Batalov S."/>
            <person name="Forrest A.R."/>
            <person name="Zavolan M."/>
            <person name="Davis M.J."/>
            <person name="Wilming L.G."/>
            <person name="Aidinis V."/>
            <person name="Allen J.E."/>
            <person name="Ambesi-Impiombato A."/>
            <person name="Apweiler R."/>
            <person name="Aturaliya R.N."/>
            <person name="Bailey T.L."/>
            <person name="Bansal M."/>
            <person name="Baxter L."/>
            <person name="Beisel K.W."/>
            <person name="Bersano T."/>
            <person name="Bono H."/>
            <person name="Chalk A.M."/>
            <person name="Chiu K.P."/>
            <person name="Choudhary V."/>
            <person name="Christoffels A."/>
            <person name="Clutterbuck D.R."/>
            <person name="Crowe M.L."/>
            <person name="Dalla E."/>
            <person name="Dalrymple B.P."/>
            <person name="de Bono B."/>
            <person name="Della Gatta G."/>
            <person name="di Bernardo D."/>
            <person name="Down T."/>
            <person name="Engstrom P."/>
            <person name="Fagiolini M."/>
            <person name="Faulkner G."/>
            <person name="Fletcher C.F."/>
            <person name="Fukushima T."/>
            <person name="Furuno M."/>
            <person name="Futaki S."/>
            <person name="Gariboldi M."/>
            <person name="Georgii-Hemming P."/>
            <person name="Gingeras T.R."/>
            <person name="Gojobori T."/>
            <person name="Green R.E."/>
            <person name="Gustincich S."/>
            <person name="Harbers M."/>
            <person name="Hayashi Y."/>
            <person name="Hensch T.K."/>
            <person name="Hirokawa N."/>
            <person name="Hill D."/>
            <person name="Huminiecki L."/>
            <person name="Iacono M."/>
            <person name="Ikeo K."/>
            <person name="Iwama A."/>
            <person name="Ishikawa T."/>
            <person name="Jakt M."/>
            <person name="Kanapin A."/>
            <person name="Katoh M."/>
            <person name="Kawasawa Y."/>
            <person name="Kelso J."/>
            <person name="Kitamura H."/>
            <person name="Kitano H."/>
            <person name="Kollias G."/>
            <person name="Krishnan S.P."/>
            <person name="Kruger A."/>
            <person name="Kummerfeld S.K."/>
            <person name="Kurochkin I.V."/>
            <person name="Lareau L.F."/>
            <person name="Lazarevic D."/>
            <person name="Lipovich L."/>
            <person name="Liu J."/>
            <person name="Liuni S."/>
            <person name="McWilliam S."/>
            <person name="Madan Babu M."/>
            <person name="Madera M."/>
            <person name="Marchionni L."/>
            <person name="Matsuda H."/>
            <person name="Matsuzawa S."/>
            <person name="Miki H."/>
            <person name="Mignone F."/>
            <person name="Miyake S."/>
            <person name="Morris K."/>
            <person name="Mottagui-Tabar S."/>
            <person name="Mulder N."/>
            <person name="Nakano N."/>
            <person name="Nakauchi H."/>
            <person name="Ng P."/>
            <person name="Nilsson R."/>
            <person name="Nishiguchi S."/>
            <person name="Nishikawa S."/>
            <person name="Nori F."/>
            <person name="Ohara O."/>
            <person name="Okazaki Y."/>
            <person name="Orlando V."/>
            <person name="Pang K.C."/>
            <person name="Pavan W.J."/>
            <person name="Pavesi G."/>
            <person name="Pesole G."/>
            <person name="Petrovsky N."/>
            <person name="Piazza S."/>
            <person name="Reed J."/>
            <person name="Reid J.F."/>
            <person name="Ring B.Z."/>
            <person name="Ringwald M."/>
            <person name="Rost B."/>
            <person name="Ruan Y."/>
            <person name="Salzberg S.L."/>
            <person name="Sandelin A."/>
            <person name="Schneider C."/>
            <person name="Schoenbach C."/>
            <person name="Sekiguchi K."/>
            <person name="Semple C.A."/>
            <person name="Seno S."/>
            <person name="Sessa L."/>
            <person name="Sheng Y."/>
            <person name="Shibata Y."/>
            <person name="Shimada H."/>
            <person name="Shimada K."/>
            <person name="Silva D."/>
            <person name="Sinclair B."/>
            <person name="Sperling S."/>
            <person name="Stupka E."/>
            <person name="Sugiura K."/>
            <person name="Sultana R."/>
            <person name="Takenaka Y."/>
            <person name="Taki K."/>
            <person name="Tammoja K."/>
            <person name="Tan S.L."/>
            <person name="Tang S."/>
            <person name="Taylor M.S."/>
            <person name="Tegner J."/>
            <person name="Teichmann S.A."/>
            <person name="Ueda H.R."/>
            <person name="van Nimwegen E."/>
            <person name="Verardo R."/>
            <person name="Wei C.L."/>
            <person name="Yagi K."/>
            <person name="Yamanishi H."/>
            <person name="Zabarovsky E."/>
            <person name="Zhu S."/>
            <person name="Zimmer A."/>
            <person name="Hide W."/>
            <person name="Bult C."/>
            <person name="Grimmond S.M."/>
            <person name="Teasdale R.D."/>
            <person name="Liu E.T."/>
            <person name="Brusic V."/>
            <person name="Quackenbush J."/>
            <person name="Wahlestedt C."/>
            <person name="Mattick J.S."/>
            <person name="Hume D.A."/>
            <person name="Kai C."/>
            <person name="Sasaki D."/>
            <person name="Tomaru Y."/>
            <person name="Fukuda S."/>
            <person name="Kanamori-Katayama M."/>
            <person name="Suzuki M."/>
            <person name="Aoki J."/>
            <person name="Arakawa T."/>
            <person name="Iida J."/>
            <person name="Imamura K."/>
            <person name="Itoh M."/>
            <person name="Kato T."/>
            <person name="Kawaji H."/>
            <person name="Kawagashira N."/>
            <person name="Kawashima T."/>
            <person name="Kojima M."/>
            <person name="Kondo S."/>
            <person name="Konno H."/>
            <person name="Nakano K."/>
            <person name="Ninomiya N."/>
            <person name="Nishio T."/>
            <person name="Okada M."/>
            <person name="Plessy C."/>
            <person name="Shibata K."/>
            <person name="Shiraki T."/>
            <person name="Suzuki S."/>
            <person name="Tagami M."/>
            <person name="Waki K."/>
            <person name="Watahiki A."/>
            <person name="Okamura-Oho Y."/>
            <person name="Suzuki H."/>
            <person name="Kawai J."/>
            <person name="Hayashizaki Y."/>
        </authorList>
    </citation>
    <scope>NUCLEOTIDE SEQUENCE [LARGE SCALE MRNA]</scope>
    <source>
        <strain>C57BL/6J</strain>
        <tissue>Pancreas</tissue>
    </source>
</reference>
<reference key="2">
    <citation type="journal article" date="2010" name="Cell">
        <title>A tissue-specific atlas of mouse protein phosphorylation and expression.</title>
        <authorList>
            <person name="Huttlin E.L."/>
            <person name="Jedrychowski M.P."/>
            <person name="Elias J.E."/>
            <person name="Goswami T."/>
            <person name="Rad R."/>
            <person name="Beausoleil S.A."/>
            <person name="Villen J."/>
            <person name="Haas W."/>
            <person name="Sowa M.E."/>
            <person name="Gygi S.P."/>
        </authorList>
    </citation>
    <scope>IDENTIFICATION BY MASS SPECTROMETRY [LARGE SCALE ANALYSIS]</scope>
    <source>
        <tissue>Pancreas</tissue>
        <tissue>Spleen</tissue>
    </source>
</reference>
<protein>
    <recommendedName>
        <fullName>Transmembrane emp24 domain-containing protein 11</fullName>
    </recommendedName>
    <alternativeName>
        <fullName>Glycoprotein 25L</fullName>
        <shortName>GP25L</shortName>
    </alternativeName>
    <alternativeName>
        <fullName>p24 family protein alpha-1</fullName>
        <shortName>p24alpha1</shortName>
    </alternativeName>
</protein>
<gene>
    <name type="primary">Tmed11</name>
</gene>
<accession>Q9D2R4</accession>
<keyword id="KW-0175">Coiled coil</keyword>
<keyword id="KW-0256">Endoplasmic reticulum</keyword>
<keyword id="KW-0325">Glycoprotein</keyword>
<keyword id="KW-0472">Membrane</keyword>
<keyword id="KW-1185">Reference proteome</keyword>
<keyword id="KW-0732">Signal</keyword>
<keyword id="KW-0812">Transmembrane</keyword>
<keyword id="KW-1133">Transmembrane helix</keyword>
<dbReference type="EMBL" id="AK019032">
    <property type="protein sequence ID" value="BAB31517.1"/>
    <property type="molecule type" value="mRNA"/>
</dbReference>
<dbReference type="CCDS" id="CCDS19519.1"/>
<dbReference type="RefSeq" id="NP_080385.2">
    <property type="nucleotide sequence ID" value="NM_026109.2"/>
</dbReference>
<dbReference type="SMR" id="Q9D2R4"/>
<dbReference type="FunCoup" id="Q9D2R4">
    <property type="interactions" value="267"/>
</dbReference>
<dbReference type="STRING" id="10090.ENSMUSP00000004943"/>
<dbReference type="GlyCosmos" id="Q9D2R4">
    <property type="glycosylation" value="1 site, No reported glycans"/>
</dbReference>
<dbReference type="GlyGen" id="Q9D2R4">
    <property type="glycosylation" value="1 site"/>
</dbReference>
<dbReference type="PaxDb" id="10090-ENSMUSP00000004943"/>
<dbReference type="ProteomicsDB" id="259474"/>
<dbReference type="DNASU" id="67366"/>
<dbReference type="Ensembl" id="ENSMUST00000004943.2">
    <property type="protein sequence ID" value="ENSMUSP00000004943.2"/>
    <property type="gene ID" value="ENSMUSG00000004821.2"/>
</dbReference>
<dbReference type="GeneID" id="67366"/>
<dbReference type="KEGG" id="mmu:67366"/>
<dbReference type="UCSC" id="uc008ypd.1">
    <property type="organism name" value="mouse"/>
</dbReference>
<dbReference type="AGR" id="MGI:1914616"/>
<dbReference type="CTD" id="67366"/>
<dbReference type="MGI" id="MGI:1914616">
    <property type="gene designation" value="Tmed11"/>
</dbReference>
<dbReference type="VEuPathDB" id="HostDB:ENSMUSG00000004821"/>
<dbReference type="eggNOG" id="KOG1690">
    <property type="taxonomic scope" value="Eukaryota"/>
</dbReference>
<dbReference type="GeneTree" id="ENSGT00940000160999"/>
<dbReference type="HOGENOM" id="CLU_066963_2_2_1"/>
<dbReference type="InParanoid" id="Q9D2R4"/>
<dbReference type="OMA" id="AEREEKC"/>
<dbReference type="OrthoDB" id="3427at2759"/>
<dbReference type="PhylomeDB" id="Q9D2R4"/>
<dbReference type="TreeFam" id="TF314123"/>
<dbReference type="BioGRID-ORCS" id="67366">
    <property type="hits" value="3 hits in 77 CRISPR screens"/>
</dbReference>
<dbReference type="PRO" id="PR:Q9D2R4"/>
<dbReference type="Proteomes" id="UP000000589">
    <property type="component" value="Chromosome 5"/>
</dbReference>
<dbReference type="RNAct" id="Q9D2R4">
    <property type="molecule type" value="protein"/>
</dbReference>
<dbReference type="Bgee" id="ENSMUSG00000004821">
    <property type="expression patterns" value="Expressed in pyloric antrum and 8 other cell types or tissues"/>
</dbReference>
<dbReference type="ExpressionAtlas" id="Q9D2R4">
    <property type="expression patterns" value="baseline and differential"/>
</dbReference>
<dbReference type="GO" id="GO:0005789">
    <property type="term" value="C:endoplasmic reticulum membrane"/>
    <property type="evidence" value="ECO:0007669"/>
    <property type="project" value="UniProtKB-SubCell"/>
</dbReference>
<dbReference type="InterPro" id="IPR015720">
    <property type="entry name" value="Emp24-like"/>
</dbReference>
<dbReference type="InterPro" id="IPR009038">
    <property type="entry name" value="GOLD_dom"/>
</dbReference>
<dbReference type="PANTHER" id="PTHR22811">
    <property type="entry name" value="TRANSMEMBRANE EMP24 DOMAIN-CONTAINING PROTEIN"/>
    <property type="match status" value="1"/>
</dbReference>
<dbReference type="Pfam" id="PF01105">
    <property type="entry name" value="EMP24_GP25L"/>
    <property type="match status" value="1"/>
</dbReference>
<dbReference type="SMART" id="SM01190">
    <property type="entry name" value="EMP24_GP25L"/>
    <property type="match status" value="1"/>
</dbReference>
<dbReference type="PROSITE" id="PS50866">
    <property type="entry name" value="GOLD"/>
    <property type="match status" value="1"/>
</dbReference>
<sequence length="215" mass="24842">MQIQTILLCFSFSFSAAFYFHAGEREEKCIIEDIPSDTLITGTFKVQQWDIVRHDFLESAPGLGMFVTVTTYNDEVLLSKLYGAQGTFYFTSHSSGEHIICLESNSTQFVSFGGSKLRIHLDIRVGEHDLDAAIVQAKDKVNEVTFKLQHLIEQVEQILKEQDYQRDREENFRITSEDTNRNVLWWAFAQILIFISVGIFQMKHLKDFFIAKKLV</sequence>
<comment type="function">
    <text evidence="1">Part of a complex whose function is to bind Ca(2+) to the ER membrane and thereby regulate the retention of ER resident proteins.</text>
</comment>
<comment type="subcellular location">
    <subcellularLocation>
        <location evidence="1">Endoplasmic reticulum membrane</location>
        <topology evidence="1">Single-pass type I membrane protein</topology>
    </subcellularLocation>
</comment>
<comment type="similarity">
    <text evidence="4">Belongs to the EMP24/GP25L family.</text>
</comment>